<organism>
    <name type="scientific">Pisum sativum</name>
    <name type="common">Garden pea</name>
    <name type="synonym">Lathyrus oleraceus</name>
    <dbReference type="NCBI Taxonomy" id="3888"/>
    <lineage>
        <taxon>Eukaryota</taxon>
        <taxon>Viridiplantae</taxon>
        <taxon>Streptophyta</taxon>
        <taxon>Embryophyta</taxon>
        <taxon>Tracheophyta</taxon>
        <taxon>Spermatophyta</taxon>
        <taxon>Magnoliopsida</taxon>
        <taxon>eudicotyledons</taxon>
        <taxon>Gunneridae</taxon>
        <taxon>Pentapetalae</taxon>
        <taxon>rosids</taxon>
        <taxon>fabids</taxon>
        <taxon>Fabales</taxon>
        <taxon>Fabaceae</taxon>
        <taxon>Papilionoideae</taxon>
        <taxon>50 kb inversion clade</taxon>
        <taxon>NPAAA clade</taxon>
        <taxon>Hologalegina</taxon>
        <taxon>IRL clade</taxon>
        <taxon>Fabeae</taxon>
        <taxon>Pisum</taxon>
    </lineage>
</organism>
<reference key="1">
    <citation type="journal article" date="1987" name="Eur. J. Biochem.">
        <title>Molecular cloning of a pea H1 histone cDNA.</title>
        <authorList>
            <person name="Gantt S."/>
            <person name="Key J.L."/>
        </authorList>
    </citation>
    <scope>NUCLEOTIDE SEQUENCE [MRNA]</scope>
    <source>
        <strain>cv. Little Marvel</strain>
    </source>
</reference>
<reference key="2">
    <citation type="journal article" date="1995" name="Plant Mol. Biol.">
        <title>Molecular cloning and expression of mRNAs encoding H1 histone and an H1 histone-like sequences in root tips of pea (Psium sativum L.).</title>
        <authorList>
            <person name="Woo H.H."/>
            <person name="Brigham L.A."/>
            <person name="Hawes M.C."/>
        </authorList>
    </citation>
    <scope>NUCLEOTIDE SEQUENCE [GENOMIC DNA] OF 213-265</scope>
    <source>
        <strain>cv. Little Marvel</strain>
        <tissue>Root tip</tissue>
    </source>
</reference>
<protein>
    <recommendedName>
        <fullName>Histone H1</fullName>
    </recommendedName>
    <alternativeName>
        <fullName>PsH1b</fullName>
    </alternativeName>
    <alternativeName>
        <fullName>PsH1b-40</fullName>
    </alternativeName>
</protein>
<name>H1_PEA</name>
<comment type="function">
    <text>Histones H1 are necessary for the condensation of nucleosome chains into higher-order structures.</text>
</comment>
<comment type="subcellular location">
    <subcellularLocation>
        <location>Nucleus</location>
    </subcellularLocation>
    <subcellularLocation>
        <location>Chromosome</location>
    </subcellularLocation>
</comment>
<comment type="similarity">
    <text evidence="1">Belongs to the histone H1/H5 family.</text>
</comment>
<accession>P08283</accession>
<proteinExistence type="evidence at transcript level"/>
<sequence>MATEEPIVAVETVPEPIVTEPTTITEPEVPEKEEPKAEVEKTKKAKGSKPKKASKPRNPASHPTYEEMIKDAIVSLKEKNGSSQYAIAKFIEEKQKQLPANFKKLLLQNLKKNVASGKLIKVKGSFKLSAAAKKPAVAKPKAKTAAKAKSVKAKPAAKPKAKAVVKPKVASKAKAVAAKPKKAAAKPKTVAAKTKPTAAKPKAVVKPKSKVKPAKVAKTSVKTTPGKKVAAVKKVAAKKVPVKSVKAKSVKSPVKKVSVKRGGRK</sequence>
<feature type="chain" id="PRO_0000195955" description="Histone H1">
    <location>
        <begin position="1"/>
        <end position="265"/>
    </location>
</feature>
<feature type="domain" description="H15" evidence="1">
    <location>
        <begin position="61"/>
        <end position="130"/>
    </location>
</feature>
<feature type="region of interest" description="Disordered" evidence="2">
    <location>
        <begin position="1"/>
        <end position="66"/>
    </location>
</feature>
<feature type="region of interest" description="Disordered" evidence="2">
    <location>
        <begin position="131"/>
        <end position="226"/>
    </location>
</feature>
<feature type="region of interest" description="Disordered" evidence="2">
    <location>
        <begin position="242"/>
        <end position="265"/>
    </location>
</feature>
<feature type="compositionally biased region" description="Low complexity" evidence="2">
    <location>
        <begin position="1"/>
        <end position="27"/>
    </location>
</feature>
<feature type="compositionally biased region" description="Basic and acidic residues" evidence="2">
    <location>
        <begin position="29"/>
        <end position="42"/>
    </location>
</feature>
<feature type="compositionally biased region" description="Basic residues" evidence="2">
    <location>
        <begin position="43"/>
        <end position="55"/>
    </location>
</feature>
<feature type="compositionally biased region" description="Basic residues" evidence="2">
    <location>
        <begin position="140"/>
        <end position="171"/>
    </location>
</feature>
<feature type="compositionally biased region" description="Low complexity" evidence="2">
    <location>
        <begin position="186"/>
        <end position="202"/>
    </location>
</feature>
<feature type="compositionally biased region" description="Basic residues" evidence="2">
    <location>
        <begin position="203"/>
        <end position="215"/>
    </location>
</feature>
<feature type="compositionally biased region" description="Low complexity" evidence="2">
    <location>
        <begin position="216"/>
        <end position="226"/>
    </location>
</feature>
<evidence type="ECO:0000255" key="1">
    <source>
        <dbReference type="PROSITE-ProRule" id="PRU00837"/>
    </source>
</evidence>
<evidence type="ECO:0000256" key="2">
    <source>
        <dbReference type="SAM" id="MobiDB-lite"/>
    </source>
</evidence>
<dbReference type="EMBL" id="X05636">
    <property type="protein sequence ID" value="CAA29123.1"/>
    <property type="molecule type" value="mRNA"/>
</dbReference>
<dbReference type="EMBL" id="L40471">
    <property type="status" value="NOT_ANNOTATED_CDS"/>
    <property type="molecule type" value="Genomic_DNA"/>
</dbReference>
<dbReference type="PIR" id="S00033">
    <property type="entry name" value="S00033"/>
</dbReference>
<dbReference type="RefSeq" id="NP_001413897.1">
    <property type="nucleotide sequence ID" value="NM_001426968.1"/>
</dbReference>
<dbReference type="SMR" id="P08283"/>
<dbReference type="EnsemblPlants" id="Psat6g056720.1">
    <property type="protein sequence ID" value="Psat6g056720.1.cds"/>
    <property type="gene ID" value="Psat6g056720"/>
</dbReference>
<dbReference type="GeneID" id="127097374"/>
<dbReference type="Gramene" id="Psat6g056720.1">
    <property type="protein sequence ID" value="Psat6g056720.1.cds"/>
    <property type="gene ID" value="Psat6g056720"/>
</dbReference>
<dbReference type="OrthoDB" id="1110759at2759"/>
<dbReference type="GO" id="GO:0000786">
    <property type="term" value="C:nucleosome"/>
    <property type="evidence" value="ECO:0007669"/>
    <property type="project" value="InterPro"/>
</dbReference>
<dbReference type="GO" id="GO:0005634">
    <property type="term" value="C:nucleus"/>
    <property type="evidence" value="ECO:0007669"/>
    <property type="project" value="UniProtKB-SubCell"/>
</dbReference>
<dbReference type="GO" id="GO:0003690">
    <property type="term" value="F:double-stranded DNA binding"/>
    <property type="evidence" value="ECO:0007669"/>
    <property type="project" value="TreeGrafter"/>
</dbReference>
<dbReference type="GO" id="GO:0008168">
    <property type="term" value="F:methyltransferase activity"/>
    <property type="evidence" value="ECO:0007669"/>
    <property type="project" value="UniProtKB-ARBA"/>
</dbReference>
<dbReference type="GO" id="GO:0031492">
    <property type="term" value="F:nucleosomal DNA binding"/>
    <property type="evidence" value="ECO:0007669"/>
    <property type="project" value="TreeGrafter"/>
</dbReference>
<dbReference type="GO" id="GO:0030527">
    <property type="term" value="F:structural constituent of chromatin"/>
    <property type="evidence" value="ECO:0007669"/>
    <property type="project" value="InterPro"/>
</dbReference>
<dbReference type="GO" id="GO:0030261">
    <property type="term" value="P:chromosome condensation"/>
    <property type="evidence" value="ECO:0007669"/>
    <property type="project" value="TreeGrafter"/>
</dbReference>
<dbReference type="GO" id="GO:0045910">
    <property type="term" value="P:negative regulation of DNA recombination"/>
    <property type="evidence" value="ECO:0007669"/>
    <property type="project" value="TreeGrafter"/>
</dbReference>
<dbReference type="GO" id="GO:0006334">
    <property type="term" value="P:nucleosome assembly"/>
    <property type="evidence" value="ECO:0007669"/>
    <property type="project" value="InterPro"/>
</dbReference>
<dbReference type="CDD" id="cd00073">
    <property type="entry name" value="H15"/>
    <property type="match status" value="1"/>
</dbReference>
<dbReference type="Gene3D" id="1.10.10.10">
    <property type="entry name" value="Winged helix-like DNA-binding domain superfamily/Winged helix DNA-binding domain"/>
    <property type="match status" value="1"/>
</dbReference>
<dbReference type="InterPro" id="IPR005819">
    <property type="entry name" value="H1/H5"/>
</dbReference>
<dbReference type="InterPro" id="IPR005818">
    <property type="entry name" value="Histone_H1/H5_H15"/>
</dbReference>
<dbReference type="InterPro" id="IPR036388">
    <property type="entry name" value="WH-like_DNA-bd_sf"/>
</dbReference>
<dbReference type="InterPro" id="IPR036390">
    <property type="entry name" value="WH_DNA-bd_sf"/>
</dbReference>
<dbReference type="PANTHER" id="PTHR11467">
    <property type="entry name" value="HISTONE H1"/>
    <property type="match status" value="1"/>
</dbReference>
<dbReference type="PANTHER" id="PTHR11467:SF143">
    <property type="entry name" value="HISTONE H1"/>
    <property type="match status" value="1"/>
</dbReference>
<dbReference type="Pfam" id="PF00538">
    <property type="entry name" value="Linker_histone"/>
    <property type="match status" value="1"/>
</dbReference>
<dbReference type="PRINTS" id="PR00624">
    <property type="entry name" value="HISTONEH5"/>
</dbReference>
<dbReference type="SMART" id="SM00526">
    <property type="entry name" value="H15"/>
    <property type="match status" value="1"/>
</dbReference>
<dbReference type="SUPFAM" id="SSF46785">
    <property type="entry name" value="Winged helix' DNA-binding domain"/>
    <property type="match status" value="1"/>
</dbReference>
<dbReference type="PROSITE" id="PS51504">
    <property type="entry name" value="H15"/>
    <property type="match status" value="1"/>
</dbReference>
<keyword id="KW-0158">Chromosome</keyword>
<keyword id="KW-0238">DNA-binding</keyword>
<keyword id="KW-0539">Nucleus</keyword>